<evidence type="ECO:0000255" key="1">
    <source>
        <dbReference type="HAMAP-Rule" id="MF_01690"/>
    </source>
</evidence>
<evidence type="ECO:0000305" key="2"/>
<accession>Q13XA2</accession>
<gene>
    <name evidence="1" type="primary">dapE</name>
    <name type="ordered locus">Bxeno_A2749</name>
    <name type="ORF">Bxe_A1668</name>
</gene>
<name>DAPE_PARXL</name>
<proteinExistence type="inferred from homology"/>
<comment type="function">
    <text evidence="1">Catalyzes the hydrolysis of N-succinyl-L,L-diaminopimelic acid (SDAP), forming succinate and LL-2,6-diaminopimelate (DAP), an intermediate involved in the bacterial biosynthesis of lysine and meso-diaminopimelic acid, an essential component of bacterial cell walls.</text>
</comment>
<comment type="catalytic activity">
    <reaction evidence="1">
        <text>N-succinyl-(2S,6S)-2,6-diaminopimelate + H2O = (2S,6S)-2,6-diaminopimelate + succinate</text>
        <dbReference type="Rhea" id="RHEA:22608"/>
        <dbReference type="ChEBI" id="CHEBI:15377"/>
        <dbReference type="ChEBI" id="CHEBI:30031"/>
        <dbReference type="ChEBI" id="CHEBI:57609"/>
        <dbReference type="ChEBI" id="CHEBI:58087"/>
        <dbReference type="EC" id="3.5.1.18"/>
    </reaction>
</comment>
<comment type="cofactor">
    <cofactor evidence="1">
        <name>Zn(2+)</name>
        <dbReference type="ChEBI" id="CHEBI:29105"/>
    </cofactor>
    <cofactor evidence="1">
        <name>Co(2+)</name>
        <dbReference type="ChEBI" id="CHEBI:48828"/>
    </cofactor>
    <text evidence="1">Binds 2 Zn(2+) or Co(2+) ions per subunit.</text>
</comment>
<comment type="pathway">
    <text evidence="1">Amino-acid biosynthesis; L-lysine biosynthesis via DAP pathway; LL-2,6-diaminopimelate from (S)-tetrahydrodipicolinate (succinylase route): step 3/3.</text>
</comment>
<comment type="subunit">
    <text evidence="1">Homodimer.</text>
</comment>
<comment type="similarity">
    <text evidence="1">Belongs to the peptidase M20A family. DapE subfamily.</text>
</comment>
<comment type="sequence caution" evidence="2">
    <conflict type="erroneous initiation">
        <sequence resource="EMBL-CDS" id="ABE31287"/>
    </conflict>
</comment>
<keyword id="KW-0028">Amino-acid biosynthesis</keyword>
<keyword id="KW-0170">Cobalt</keyword>
<keyword id="KW-0220">Diaminopimelate biosynthesis</keyword>
<keyword id="KW-0378">Hydrolase</keyword>
<keyword id="KW-0457">Lysine biosynthesis</keyword>
<keyword id="KW-0479">Metal-binding</keyword>
<keyword id="KW-1185">Reference proteome</keyword>
<keyword id="KW-0862">Zinc</keyword>
<dbReference type="EC" id="3.5.1.18" evidence="1"/>
<dbReference type="EMBL" id="CP000270">
    <property type="protein sequence ID" value="ABE31287.1"/>
    <property type="status" value="ALT_INIT"/>
    <property type="molecule type" value="Genomic_DNA"/>
</dbReference>
<dbReference type="RefSeq" id="WP_038458706.1">
    <property type="nucleotide sequence ID" value="NC_007951.1"/>
</dbReference>
<dbReference type="SMR" id="Q13XA2"/>
<dbReference type="STRING" id="266265.Bxe_A1668"/>
<dbReference type="KEGG" id="bxb:DR64_3833"/>
<dbReference type="KEGG" id="bxe:Bxe_A1668"/>
<dbReference type="PATRIC" id="fig|266265.5.peg.2883"/>
<dbReference type="eggNOG" id="COG0624">
    <property type="taxonomic scope" value="Bacteria"/>
</dbReference>
<dbReference type="OrthoDB" id="9809784at2"/>
<dbReference type="UniPathway" id="UPA00034">
    <property type="reaction ID" value="UER00021"/>
</dbReference>
<dbReference type="Proteomes" id="UP000001817">
    <property type="component" value="Chromosome 1"/>
</dbReference>
<dbReference type="GO" id="GO:0008777">
    <property type="term" value="F:acetylornithine deacetylase activity"/>
    <property type="evidence" value="ECO:0007669"/>
    <property type="project" value="TreeGrafter"/>
</dbReference>
<dbReference type="GO" id="GO:0050897">
    <property type="term" value="F:cobalt ion binding"/>
    <property type="evidence" value="ECO:0007669"/>
    <property type="project" value="UniProtKB-UniRule"/>
</dbReference>
<dbReference type="GO" id="GO:0009014">
    <property type="term" value="F:succinyl-diaminopimelate desuccinylase activity"/>
    <property type="evidence" value="ECO:0007669"/>
    <property type="project" value="UniProtKB-UniRule"/>
</dbReference>
<dbReference type="GO" id="GO:0008270">
    <property type="term" value="F:zinc ion binding"/>
    <property type="evidence" value="ECO:0007669"/>
    <property type="project" value="UniProtKB-UniRule"/>
</dbReference>
<dbReference type="GO" id="GO:0019877">
    <property type="term" value="P:diaminopimelate biosynthetic process"/>
    <property type="evidence" value="ECO:0007669"/>
    <property type="project" value="UniProtKB-UniRule"/>
</dbReference>
<dbReference type="GO" id="GO:0006526">
    <property type="term" value="P:L-arginine biosynthetic process"/>
    <property type="evidence" value="ECO:0007669"/>
    <property type="project" value="TreeGrafter"/>
</dbReference>
<dbReference type="GO" id="GO:0009089">
    <property type="term" value="P:lysine biosynthetic process via diaminopimelate"/>
    <property type="evidence" value="ECO:0007669"/>
    <property type="project" value="UniProtKB-UniRule"/>
</dbReference>
<dbReference type="CDD" id="cd03891">
    <property type="entry name" value="M20_DapE_proteobac"/>
    <property type="match status" value="1"/>
</dbReference>
<dbReference type="FunFam" id="3.30.70.360:FF:000011">
    <property type="entry name" value="Succinyl-diaminopimelate desuccinylase"/>
    <property type="match status" value="1"/>
</dbReference>
<dbReference type="FunFam" id="3.40.630.10:FF:000005">
    <property type="entry name" value="Succinyl-diaminopimelate desuccinylase"/>
    <property type="match status" value="1"/>
</dbReference>
<dbReference type="Gene3D" id="1.10.150.900">
    <property type="match status" value="1"/>
</dbReference>
<dbReference type="Gene3D" id="3.30.70.360">
    <property type="match status" value="1"/>
</dbReference>
<dbReference type="Gene3D" id="3.40.630.10">
    <property type="entry name" value="Zn peptidases"/>
    <property type="match status" value="1"/>
</dbReference>
<dbReference type="HAMAP" id="MF_01690">
    <property type="entry name" value="DapE"/>
    <property type="match status" value="1"/>
</dbReference>
<dbReference type="InterPro" id="IPR001261">
    <property type="entry name" value="ArgE/DapE_CS"/>
</dbReference>
<dbReference type="InterPro" id="IPR036264">
    <property type="entry name" value="Bact_exopeptidase_dim_dom"/>
</dbReference>
<dbReference type="InterPro" id="IPR005941">
    <property type="entry name" value="DapE_proteobac"/>
</dbReference>
<dbReference type="InterPro" id="IPR002933">
    <property type="entry name" value="Peptidase_M20"/>
</dbReference>
<dbReference type="InterPro" id="IPR011650">
    <property type="entry name" value="Peptidase_M20_dimer"/>
</dbReference>
<dbReference type="InterPro" id="IPR050072">
    <property type="entry name" value="Peptidase_M20A"/>
</dbReference>
<dbReference type="NCBIfam" id="TIGR01246">
    <property type="entry name" value="dapE_proteo"/>
    <property type="match status" value="1"/>
</dbReference>
<dbReference type="NCBIfam" id="NF009557">
    <property type="entry name" value="PRK13009.1"/>
    <property type="match status" value="1"/>
</dbReference>
<dbReference type="PANTHER" id="PTHR43808">
    <property type="entry name" value="ACETYLORNITHINE DEACETYLASE"/>
    <property type="match status" value="1"/>
</dbReference>
<dbReference type="PANTHER" id="PTHR43808:SF31">
    <property type="entry name" value="N-ACETYL-L-CITRULLINE DEACETYLASE"/>
    <property type="match status" value="1"/>
</dbReference>
<dbReference type="Pfam" id="PF07687">
    <property type="entry name" value="M20_dimer"/>
    <property type="match status" value="1"/>
</dbReference>
<dbReference type="Pfam" id="PF01546">
    <property type="entry name" value="Peptidase_M20"/>
    <property type="match status" value="1"/>
</dbReference>
<dbReference type="SUPFAM" id="SSF55031">
    <property type="entry name" value="Bacterial exopeptidase dimerisation domain"/>
    <property type="match status" value="1"/>
</dbReference>
<dbReference type="SUPFAM" id="SSF53187">
    <property type="entry name" value="Zn-dependent exopeptidases"/>
    <property type="match status" value="1"/>
</dbReference>
<dbReference type="PROSITE" id="PS00758">
    <property type="entry name" value="ARGE_DAPE_CPG2_1"/>
    <property type="match status" value="1"/>
</dbReference>
<dbReference type="PROSITE" id="PS00759">
    <property type="entry name" value="ARGE_DAPE_CPG2_2"/>
    <property type="match status" value="1"/>
</dbReference>
<reference key="1">
    <citation type="journal article" date="2006" name="Proc. Natl. Acad. Sci. U.S.A.">
        <title>Burkholderia xenovorans LB400 harbors a multi-replicon, 9.73-Mbp genome shaped for versatility.</title>
        <authorList>
            <person name="Chain P.S.G."/>
            <person name="Denef V.J."/>
            <person name="Konstantinidis K.T."/>
            <person name="Vergez L.M."/>
            <person name="Agullo L."/>
            <person name="Reyes V.L."/>
            <person name="Hauser L."/>
            <person name="Cordova M."/>
            <person name="Gomez L."/>
            <person name="Gonzalez M."/>
            <person name="Land M."/>
            <person name="Lao V."/>
            <person name="Larimer F."/>
            <person name="LiPuma J.J."/>
            <person name="Mahenthiralingam E."/>
            <person name="Malfatti S.A."/>
            <person name="Marx C.J."/>
            <person name="Parnell J.J."/>
            <person name="Ramette A."/>
            <person name="Richardson P."/>
            <person name="Seeger M."/>
            <person name="Smith D."/>
            <person name="Spilker T."/>
            <person name="Sul W.J."/>
            <person name="Tsoi T.V."/>
            <person name="Ulrich L.E."/>
            <person name="Zhulin I.B."/>
            <person name="Tiedje J.M."/>
        </authorList>
    </citation>
    <scope>NUCLEOTIDE SEQUENCE [LARGE SCALE GENOMIC DNA]</scope>
    <source>
        <strain>LB400</strain>
    </source>
</reference>
<organism>
    <name type="scientific">Paraburkholderia xenovorans (strain LB400)</name>
    <dbReference type="NCBI Taxonomy" id="266265"/>
    <lineage>
        <taxon>Bacteria</taxon>
        <taxon>Pseudomonadati</taxon>
        <taxon>Pseudomonadota</taxon>
        <taxon>Betaproteobacteria</taxon>
        <taxon>Burkholderiales</taxon>
        <taxon>Burkholderiaceae</taxon>
        <taxon>Paraburkholderia</taxon>
    </lineage>
</organism>
<sequence>MSGTLALTEQLIARASVTPDDQHCQRLLIERLAALGFEHETIESNGVTNLWAVKRGVDGTAGKLLAFAGHTDVVPTGPLEQWHSAPFEPTHRDGKLYGRGAADMKASIAGFVVASEEFVAAHPAHRGSIAFLITSDEEGPATDGTIKVVEALQARGERMDYCIVGEPTSSARLGDMVKNGRRGSMSGKLIVKGVQGHIAYPHLAKNPVHLLAPALAELVAERWDDGNEYFPPTTWQVSNIHSGTGATNVIAGHADVMFNFRFSTASTVEGLQARVHAILDKHKLDYDLQWTVSGLPFLTPRGDLSNALAAAIRDETGVTTELSTTGGTSDGRFIARICPQVIEFGPLNASIHKTDEHIEVAHIEPLKNVYRRVLEQLIA</sequence>
<protein>
    <recommendedName>
        <fullName evidence="1">Succinyl-diaminopimelate desuccinylase</fullName>
        <shortName evidence="1">SDAP desuccinylase</shortName>
        <ecNumber evidence="1">3.5.1.18</ecNumber>
    </recommendedName>
    <alternativeName>
        <fullName evidence="1">N-succinyl-LL-2,6-diaminoheptanedioate amidohydrolase</fullName>
    </alternativeName>
</protein>
<feature type="chain" id="PRO_0000375515" description="Succinyl-diaminopimelate desuccinylase">
    <location>
        <begin position="1"/>
        <end position="379"/>
    </location>
</feature>
<feature type="active site" evidence="1">
    <location>
        <position position="72"/>
    </location>
</feature>
<feature type="active site" description="Proton acceptor" evidence="1">
    <location>
        <position position="137"/>
    </location>
</feature>
<feature type="binding site" evidence="1">
    <location>
        <position position="70"/>
    </location>
    <ligand>
        <name>Zn(2+)</name>
        <dbReference type="ChEBI" id="CHEBI:29105"/>
        <label>1</label>
    </ligand>
</feature>
<feature type="binding site" evidence="1">
    <location>
        <position position="103"/>
    </location>
    <ligand>
        <name>Zn(2+)</name>
        <dbReference type="ChEBI" id="CHEBI:29105"/>
        <label>1</label>
    </ligand>
</feature>
<feature type="binding site" evidence="1">
    <location>
        <position position="103"/>
    </location>
    <ligand>
        <name>Zn(2+)</name>
        <dbReference type="ChEBI" id="CHEBI:29105"/>
        <label>2</label>
    </ligand>
</feature>
<feature type="binding site" evidence="1">
    <location>
        <position position="138"/>
    </location>
    <ligand>
        <name>Zn(2+)</name>
        <dbReference type="ChEBI" id="CHEBI:29105"/>
        <label>2</label>
    </ligand>
</feature>
<feature type="binding site" evidence="1">
    <location>
        <position position="166"/>
    </location>
    <ligand>
        <name>Zn(2+)</name>
        <dbReference type="ChEBI" id="CHEBI:29105"/>
        <label>1</label>
    </ligand>
</feature>
<feature type="binding site" evidence="1">
    <location>
        <position position="352"/>
    </location>
    <ligand>
        <name>Zn(2+)</name>
        <dbReference type="ChEBI" id="CHEBI:29105"/>
        <label>2</label>
    </ligand>
</feature>